<proteinExistence type="inferred from homology"/>
<accession>A8GKU1</accession>
<feature type="chain" id="PRO_1000062976" description="Thiosulfate sulfurtransferase GlpE">
    <location>
        <begin position="1"/>
        <end position="108"/>
    </location>
</feature>
<feature type="domain" description="Rhodanese" evidence="1">
    <location>
        <begin position="17"/>
        <end position="105"/>
    </location>
</feature>
<feature type="active site" description="Cysteine persulfide intermediate" evidence="1">
    <location>
        <position position="65"/>
    </location>
</feature>
<reference key="1">
    <citation type="submission" date="2007-09" db="EMBL/GenBank/DDBJ databases">
        <title>Complete sequence of chromosome of Serratia proteamaculans 568.</title>
        <authorList>
            <consortium name="US DOE Joint Genome Institute"/>
            <person name="Copeland A."/>
            <person name="Lucas S."/>
            <person name="Lapidus A."/>
            <person name="Barry K."/>
            <person name="Glavina del Rio T."/>
            <person name="Dalin E."/>
            <person name="Tice H."/>
            <person name="Pitluck S."/>
            <person name="Chain P."/>
            <person name="Malfatti S."/>
            <person name="Shin M."/>
            <person name="Vergez L."/>
            <person name="Schmutz J."/>
            <person name="Larimer F."/>
            <person name="Land M."/>
            <person name="Hauser L."/>
            <person name="Kyrpides N."/>
            <person name="Kim E."/>
            <person name="Taghavi S."/>
            <person name="Newman L."/>
            <person name="Vangronsveld J."/>
            <person name="van der Lelie D."/>
            <person name="Richardson P."/>
        </authorList>
    </citation>
    <scope>NUCLEOTIDE SEQUENCE [LARGE SCALE GENOMIC DNA]</scope>
    <source>
        <strain>568</strain>
    </source>
</reference>
<name>GLPE_SERP5</name>
<protein>
    <recommendedName>
        <fullName evidence="1">Thiosulfate sulfurtransferase GlpE</fullName>
        <ecNumber evidence="1">2.8.1.1</ecNumber>
    </recommendedName>
</protein>
<keyword id="KW-0963">Cytoplasm</keyword>
<keyword id="KW-0808">Transferase</keyword>
<dbReference type="EC" id="2.8.1.1" evidence="1"/>
<dbReference type="EMBL" id="CP000826">
    <property type="protein sequence ID" value="ABV43731.1"/>
    <property type="molecule type" value="Genomic_DNA"/>
</dbReference>
<dbReference type="SMR" id="A8GKU1"/>
<dbReference type="STRING" id="399741.Spro_4638"/>
<dbReference type="KEGG" id="spe:Spro_4638"/>
<dbReference type="eggNOG" id="COG0607">
    <property type="taxonomic scope" value="Bacteria"/>
</dbReference>
<dbReference type="HOGENOM" id="CLU_089574_14_0_6"/>
<dbReference type="OrthoDB" id="9811849at2"/>
<dbReference type="GO" id="GO:0005737">
    <property type="term" value="C:cytoplasm"/>
    <property type="evidence" value="ECO:0007669"/>
    <property type="project" value="UniProtKB-SubCell"/>
</dbReference>
<dbReference type="GO" id="GO:0004792">
    <property type="term" value="F:thiosulfate-cyanide sulfurtransferase activity"/>
    <property type="evidence" value="ECO:0007669"/>
    <property type="project" value="UniProtKB-UniRule"/>
</dbReference>
<dbReference type="GO" id="GO:0006071">
    <property type="term" value="P:glycerol metabolic process"/>
    <property type="evidence" value="ECO:0007669"/>
    <property type="project" value="UniProtKB-UniRule"/>
</dbReference>
<dbReference type="CDD" id="cd01444">
    <property type="entry name" value="GlpE_ST"/>
    <property type="match status" value="1"/>
</dbReference>
<dbReference type="Gene3D" id="3.40.250.10">
    <property type="entry name" value="Rhodanese-like domain"/>
    <property type="match status" value="1"/>
</dbReference>
<dbReference type="HAMAP" id="MF_01009">
    <property type="entry name" value="Thiosulf_sulfurtr"/>
    <property type="match status" value="1"/>
</dbReference>
<dbReference type="InterPro" id="IPR050229">
    <property type="entry name" value="GlpE_sulfurtransferase"/>
</dbReference>
<dbReference type="InterPro" id="IPR001763">
    <property type="entry name" value="Rhodanese-like_dom"/>
</dbReference>
<dbReference type="InterPro" id="IPR036873">
    <property type="entry name" value="Rhodanese-like_dom_sf"/>
</dbReference>
<dbReference type="InterPro" id="IPR023695">
    <property type="entry name" value="Thiosulf_sulfurTrfase"/>
</dbReference>
<dbReference type="NCBIfam" id="NF001195">
    <property type="entry name" value="PRK00162.1"/>
    <property type="match status" value="1"/>
</dbReference>
<dbReference type="PANTHER" id="PTHR43031">
    <property type="entry name" value="FAD-DEPENDENT OXIDOREDUCTASE"/>
    <property type="match status" value="1"/>
</dbReference>
<dbReference type="PANTHER" id="PTHR43031:SF6">
    <property type="entry name" value="THIOSULFATE SULFURTRANSFERASE GLPE"/>
    <property type="match status" value="1"/>
</dbReference>
<dbReference type="Pfam" id="PF00581">
    <property type="entry name" value="Rhodanese"/>
    <property type="match status" value="1"/>
</dbReference>
<dbReference type="SMART" id="SM00450">
    <property type="entry name" value="RHOD"/>
    <property type="match status" value="1"/>
</dbReference>
<dbReference type="SUPFAM" id="SSF52821">
    <property type="entry name" value="Rhodanese/Cell cycle control phosphatase"/>
    <property type="match status" value="1"/>
</dbReference>
<dbReference type="PROSITE" id="PS50206">
    <property type="entry name" value="RHODANESE_3"/>
    <property type="match status" value="1"/>
</dbReference>
<sequence>MEQFEAINVEQAYSRWKDGSAALVDIRDPQSFEAGHTPGAFHLTNASLQTFMQQNDFERPVMVMCYHGNSSRSAAQYLLHQGFDAVYSIDGGFEAWARQYPQDVETSA</sequence>
<evidence type="ECO:0000255" key="1">
    <source>
        <dbReference type="HAMAP-Rule" id="MF_01009"/>
    </source>
</evidence>
<organism>
    <name type="scientific">Serratia proteamaculans (strain 568)</name>
    <dbReference type="NCBI Taxonomy" id="399741"/>
    <lineage>
        <taxon>Bacteria</taxon>
        <taxon>Pseudomonadati</taxon>
        <taxon>Pseudomonadota</taxon>
        <taxon>Gammaproteobacteria</taxon>
        <taxon>Enterobacterales</taxon>
        <taxon>Yersiniaceae</taxon>
        <taxon>Serratia</taxon>
    </lineage>
</organism>
<gene>
    <name evidence="1" type="primary">glpE</name>
    <name type="ordered locus">Spro_4638</name>
</gene>
<comment type="function">
    <text evidence="1">Transferase that catalyzes the transfer of sulfur from thiosulfate to thiophilic acceptors such as cyanide or dithiols. May function in a CysM-independent thiosulfate assimilation pathway by catalyzing the conversion of thiosulfate to sulfite, which can then be used for L-cysteine biosynthesis.</text>
</comment>
<comment type="catalytic activity">
    <reaction evidence="1">
        <text>thiosulfate + hydrogen cyanide = thiocyanate + sulfite + 2 H(+)</text>
        <dbReference type="Rhea" id="RHEA:16881"/>
        <dbReference type="ChEBI" id="CHEBI:15378"/>
        <dbReference type="ChEBI" id="CHEBI:17359"/>
        <dbReference type="ChEBI" id="CHEBI:18022"/>
        <dbReference type="ChEBI" id="CHEBI:18407"/>
        <dbReference type="ChEBI" id="CHEBI:33542"/>
        <dbReference type="EC" id="2.8.1.1"/>
    </reaction>
</comment>
<comment type="catalytic activity">
    <reaction evidence="1">
        <text>thiosulfate + [thioredoxin]-dithiol = [thioredoxin]-disulfide + hydrogen sulfide + sulfite + 2 H(+)</text>
        <dbReference type="Rhea" id="RHEA:83859"/>
        <dbReference type="Rhea" id="RHEA-COMP:10698"/>
        <dbReference type="Rhea" id="RHEA-COMP:10700"/>
        <dbReference type="ChEBI" id="CHEBI:15378"/>
        <dbReference type="ChEBI" id="CHEBI:17359"/>
        <dbReference type="ChEBI" id="CHEBI:29919"/>
        <dbReference type="ChEBI" id="CHEBI:29950"/>
        <dbReference type="ChEBI" id="CHEBI:33542"/>
        <dbReference type="ChEBI" id="CHEBI:50058"/>
    </reaction>
</comment>
<comment type="subcellular location">
    <subcellularLocation>
        <location evidence="1">Cytoplasm</location>
    </subcellularLocation>
</comment>
<comment type="similarity">
    <text evidence="1">Belongs to the GlpE family.</text>
</comment>